<name>IHFA_CROS8</name>
<accession>A7MNY7</accession>
<protein>
    <recommendedName>
        <fullName evidence="1">Integration host factor subunit alpha</fullName>
        <shortName evidence="1">IHF-alpha</shortName>
    </recommendedName>
</protein>
<sequence length="99" mass="11353">MALTKAEMSEYLFDKLGLSKRDAKELVELFFEEIRRALENGEQVKLSGFGNFDLRDKNQRPGRNPKTGEDIPITARRVVTFRPGQKLKSRVENASPKEN</sequence>
<dbReference type="EMBL" id="CP000783">
    <property type="protein sequence ID" value="ABU77363.1"/>
    <property type="molecule type" value="Genomic_DNA"/>
</dbReference>
<dbReference type="RefSeq" id="WP_004387086.1">
    <property type="nucleotide sequence ID" value="NC_009778.1"/>
</dbReference>
<dbReference type="SMR" id="A7MNY7"/>
<dbReference type="GeneID" id="56730878"/>
<dbReference type="KEGG" id="esa:ESA_02114"/>
<dbReference type="HOGENOM" id="CLU_105066_1_3_6"/>
<dbReference type="Proteomes" id="UP000000260">
    <property type="component" value="Chromosome"/>
</dbReference>
<dbReference type="GO" id="GO:0005829">
    <property type="term" value="C:cytosol"/>
    <property type="evidence" value="ECO:0007669"/>
    <property type="project" value="TreeGrafter"/>
</dbReference>
<dbReference type="GO" id="GO:0003677">
    <property type="term" value="F:DNA binding"/>
    <property type="evidence" value="ECO:0007669"/>
    <property type="project" value="UniProtKB-UniRule"/>
</dbReference>
<dbReference type="GO" id="GO:0030527">
    <property type="term" value="F:structural constituent of chromatin"/>
    <property type="evidence" value="ECO:0007669"/>
    <property type="project" value="InterPro"/>
</dbReference>
<dbReference type="GO" id="GO:0006310">
    <property type="term" value="P:DNA recombination"/>
    <property type="evidence" value="ECO:0007669"/>
    <property type="project" value="UniProtKB-UniRule"/>
</dbReference>
<dbReference type="GO" id="GO:0009893">
    <property type="term" value="P:positive regulation of metabolic process"/>
    <property type="evidence" value="ECO:0007669"/>
    <property type="project" value="UniProtKB-ARBA"/>
</dbReference>
<dbReference type="GO" id="GO:0006355">
    <property type="term" value="P:regulation of DNA-templated transcription"/>
    <property type="evidence" value="ECO:0007669"/>
    <property type="project" value="UniProtKB-UniRule"/>
</dbReference>
<dbReference type="GO" id="GO:0006417">
    <property type="term" value="P:regulation of translation"/>
    <property type="evidence" value="ECO:0007669"/>
    <property type="project" value="UniProtKB-UniRule"/>
</dbReference>
<dbReference type="CDD" id="cd13835">
    <property type="entry name" value="IHF_A"/>
    <property type="match status" value="1"/>
</dbReference>
<dbReference type="FunFam" id="4.10.520.10:FF:000002">
    <property type="entry name" value="Integration host factor subunit alpha"/>
    <property type="match status" value="1"/>
</dbReference>
<dbReference type="Gene3D" id="4.10.520.10">
    <property type="entry name" value="IHF-like DNA-binding proteins"/>
    <property type="match status" value="1"/>
</dbReference>
<dbReference type="HAMAP" id="MF_00380">
    <property type="entry name" value="IHF_alpha"/>
    <property type="match status" value="1"/>
</dbReference>
<dbReference type="InterPro" id="IPR000119">
    <property type="entry name" value="Hist_DNA-bd"/>
</dbReference>
<dbReference type="InterPro" id="IPR020816">
    <property type="entry name" value="Histone-like_DNA-bd_CS"/>
</dbReference>
<dbReference type="InterPro" id="IPR010992">
    <property type="entry name" value="IHF-like_DNA-bd_dom_sf"/>
</dbReference>
<dbReference type="InterPro" id="IPR005684">
    <property type="entry name" value="IHF_alpha"/>
</dbReference>
<dbReference type="NCBIfam" id="TIGR00987">
    <property type="entry name" value="himA"/>
    <property type="match status" value="1"/>
</dbReference>
<dbReference type="NCBIfam" id="NF001401">
    <property type="entry name" value="PRK00285.1"/>
    <property type="match status" value="1"/>
</dbReference>
<dbReference type="PANTHER" id="PTHR33175">
    <property type="entry name" value="DNA-BINDING PROTEIN HU"/>
    <property type="match status" value="1"/>
</dbReference>
<dbReference type="PANTHER" id="PTHR33175:SF2">
    <property type="entry name" value="INTEGRATION HOST FACTOR SUBUNIT ALPHA"/>
    <property type="match status" value="1"/>
</dbReference>
<dbReference type="Pfam" id="PF00216">
    <property type="entry name" value="Bac_DNA_binding"/>
    <property type="match status" value="1"/>
</dbReference>
<dbReference type="PRINTS" id="PR01727">
    <property type="entry name" value="DNABINDINGHU"/>
</dbReference>
<dbReference type="SMART" id="SM00411">
    <property type="entry name" value="BHL"/>
    <property type="match status" value="1"/>
</dbReference>
<dbReference type="SUPFAM" id="SSF47729">
    <property type="entry name" value="IHF-like DNA-binding proteins"/>
    <property type="match status" value="1"/>
</dbReference>
<dbReference type="PROSITE" id="PS00045">
    <property type="entry name" value="HISTONE_LIKE"/>
    <property type="match status" value="1"/>
</dbReference>
<proteinExistence type="inferred from homology"/>
<keyword id="KW-0233">DNA recombination</keyword>
<keyword id="KW-0238">DNA-binding</keyword>
<keyword id="KW-1185">Reference proteome</keyword>
<keyword id="KW-0804">Transcription</keyword>
<keyword id="KW-0805">Transcription regulation</keyword>
<keyword id="KW-0810">Translation regulation</keyword>
<gene>
    <name evidence="1" type="primary">ihfA</name>
    <name evidence="1" type="synonym">himA</name>
    <name type="ordered locus">ESA_02114</name>
</gene>
<feature type="chain" id="PRO_1000060543" description="Integration host factor subunit alpha">
    <location>
        <begin position="1"/>
        <end position="99"/>
    </location>
</feature>
<feature type="region of interest" description="Disordered" evidence="2">
    <location>
        <begin position="49"/>
        <end position="70"/>
    </location>
</feature>
<evidence type="ECO:0000255" key="1">
    <source>
        <dbReference type="HAMAP-Rule" id="MF_00380"/>
    </source>
</evidence>
<evidence type="ECO:0000256" key="2">
    <source>
        <dbReference type="SAM" id="MobiDB-lite"/>
    </source>
</evidence>
<organism>
    <name type="scientific">Cronobacter sakazakii (strain ATCC BAA-894)</name>
    <name type="common">Enterobacter sakazakii</name>
    <dbReference type="NCBI Taxonomy" id="290339"/>
    <lineage>
        <taxon>Bacteria</taxon>
        <taxon>Pseudomonadati</taxon>
        <taxon>Pseudomonadota</taxon>
        <taxon>Gammaproteobacteria</taxon>
        <taxon>Enterobacterales</taxon>
        <taxon>Enterobacteriaceae</taxon>
        <taxon>Cronobacter</taxon>
    </lineage>
</organism>
<reference key="1">
    <citation type="journal article" date="2010" name="PLoS ONE">
        <title>Genome sequence of Cronobacter sakazakii BAA-894 and comparative genomic hybridization analysis with other Cronobacter species.</title>
        <authorList>
            <person name="Kucerova E."/>
            <person name="Clifton S.W."/>
            <person name="Xia X.Q."/>
            <person name="Long F."/>
            <person name="Porwollik S."/>
            <person name="Fulton L."/>
            <person name="Fronick C."/>
            <person name="Minx P."/>
            <person name="Kyung K."/>
            <person name="Warren W."/>
            <person name="Fulton R."/>
            <person name="Feng D."/>
            <person name="Wollam A."/>
            <person name="Shah N."/>
            <person name="Bhonagiri V."/>
            <person name="Nash W.E."/>
            <person name="Hallsworth-Pepin K."/>
            <person name="Wilson R.K."/>
            <person name="McClelland M."/>
            <person name="Forsythe S.J."/>
        </authorList>
    </citation>
    <scope>NUCLEOTIDE SEQUENCE [LARGE SCALE GENOMIC DNA]</scope>
    <source>
        <strain>ATCC BAA-894</strain>
    </source>
</reference>
<comment type="function">
    <text evidence="1">This protein is one of the two subunits of integration host factor, a specific DNA-binding protein that functions in genetic recombination as well as in transcriptional and translational control.</text>
</comment>
<comment type="subunit">
    <text evidence="1">Heterodimer of an alpha and a beta chain.</text>
</comment>
<comment type="similarity">
    <text evidence="1">Belongs to the bacterial histone-like protein family.</text>
</comment>